<evidence type="ECO:0000255" key="1">
    <source>
        <dbReference type="PROSITE-ProRule" id="PRU00291"/>
    </source>
</evidence>
<evidence type="ECO:0000269" key="2">
    <source>
    </source>
</evidence>
<evidence type="ECO:0000305" key="3"/>
<proteinExistence type="evidence at transcript level"/>
<dbReference type="EMBL" id="AB473856">
    <property type="protein sequence ID" value="BAH10567.1"/>
    <property type="molecule type" value="mRNA"/>
</dbReference>
<dbReference type="EMBL" id="AC002387">
    <property type="protein sequence ID" value="AAB82623.1"/>
    <property type="molecule type" value="Genomic_DNA"/>
</dbReference>
<dbReference type="EMBL" id="CP002685">
    <property type="protein sequence ID" value="AEC10549.1"/>
    <property type="molecule type" value="Genomic_DNA"/>
</dbReference>
<dbReference type="PIR" id="B84890">
    <property type="entry name" value="B84890"/>
</dbReference>
<dbReference type="RefSeq" id="NP_182065.1">
    <property type="nucleotide sequence ID" value="NM_130103.3"/>
</dbReference>
<dbReference type="SMR" id="O22132"/>
<dbReference type="BioGRID" id="4485">
    <property type="interactions" value="3"/>
</dbReference>
<dbReference type="STRING" id="3702.O22132"/>
<dbReference type="PaxDb" id="3702-AT2G45410.1"/>
<dbReference type="EnsemblPlants" id="AT2G45410.1">
    <property type="protein sequence ID" value="AT2G45410.1"/>
    <property type="gene ID" value="AT2G45410"/>
</dbReference>
<dbReference type="GeneID" id="819149"/>
<dbReference type="Gramene" id="AT2G45410.1">
    <property type="protein sequence ID" value="AT2G45410.1"/>
    <property type="gene ID" value="AT2G45410"/>
</dbReference>
<dbReference type="KEGG" id="ath:AT2G45410"/>
<dbReference type="Araport" id="AT2G45410"/>
<dbReference type="TAIR" id="AT2G45410">
    <property type="gene designation" value="LBD19"/>
</dbReference>
<dbReference type="eggNOG" id="ENOG502RXJX">
    <property type="taxonomic scope" value="Eukaryota"/>
</dbReference>
<dbReference type="HOGENOM" id="CLU_058353_3_2_1"/>
<dbReference type="InParanoid" id="O22132"/>
<dbReference type="OMA" id="THFDPLQ"/>
<dbReference type="OrthoDB" id="1903788at2759"/>
<dbReference type="PhylomeDB" id="O22132"/>
<dbReference type="PRO" id="PR:O22132"/>
<dbReference type="Proteomes" id="UP000006548">
    <property type="component" value="Chromosome 2"/>
</dbReference>
<dbReference type="ExpressionAtlas" id="O22132">
    <property type="expression patterns" value="baseline and differential"/>
</dbReference>
<dbReference type="InterPro" id="IPR004883">
    <property type="entry name" value="LOB"/>
</dbReference>
<dbReference type="PANTHER" id="PTHR31529">
    <property type="entry name" value="LOB DOMAIN CONTAINING PROTEIN"/>
    <property type="match status" value="1"/>
</dbReference>
<dbReference type="PANTHER" id="PTHR31529:SF28">
    <property type="entry name" value="LOB DOMAIN-CONTAINING PROTEIN 19"/>
    <property type="match status" value="1"/>
</dbReference>
<dbReference type="Pfam" id="PF03195">
    <property type="entry name" value="LOB"/>
    <property type="match status" value="1"/>
</dbReference>
<dbReference type="PROSITE" id="PS50891">
    <property type="entry name" value="LOB"/>
    <property type="match status" value="1"/>
</dbReference>
<organism>
    <name type="scientific">Arabidopsis thaliana</name>
    <name type="common">Mouse-ear cress</name>
    <dbReference type="NCBI Taxonomy" id="3702"/>
    <lineage>
        <taxon>Eukaryota</taxon>
        <taxon>Viridiplantae</taxon>
        <taxon>Streptophyta</taxon>
        <taxon>Embryophyta</taxon>
        <taxon>Tracheophyta</taxon>
        <taxon>Spermatophyta</taxon>
        <taxon>Magnoliopsida</taxon>
        <taxon>eudicotyledons</taxon>
        <taxon>Gunneridae</taxon>
        <taxon>Pentapetalae</taxon>
        <taxon>rosids</taxon>
        <taxon>malvids</taxon>
        <taxon>Brassicales</taxon>
        <taxon>Brassicaceae</taxon>
        <taxon>Camelineae</taxon>
        <taxon>Arabidopsis</taxon>
    </lineage>
</organism>
<protein>
    <recommendedName>
        <fullName>LOB domain-containing protein 19</fullName>
    </recommendedName>
    <alternativeName>
        <fullName>ASYMMETRIC LEAVES 2-like protein 23</fullName>
        <shortName>AS2-like protein 23</shortName>
    </alternativeName>
</protein>
<name>LBD19_ARATH</name>
<comment type="tissue specificity">
    <text evidence="2">Expressed in shoots, roots and floral tissues, but not in stems or leaves.</text>
</comment>
<comment type="similarity">
    <text evidence="3">Belongs to the LOB domain-containing protein family.</text>
</comment>
<keyword id="KW-1185">Reference proteome</keyword>
<feature type="chain" id="PRO_0000132270" description="LOB domain-containing protein 19">
    <location>
        <begin position="1"/>
        <end position="191"/>
    </location>
</feature>
<feature type="domain" description="LOB" evidence="1">
    <location>
        <begin position="15"/>
        <end position="117"/>
    </location>
</feature>
<gene>
    <name type="primary">LBD19</name>
    <name type="synonym">ASL23</name>
    <name type="ordered locus">At2g45410</name>
    <name type="ORF">F4L23.8</name>
</gene>
<reference key="1">
    <citation type="journal article" date="2009" name="Plant J.">
        <title>Characterization of genes in the ASYMMETRIC LEAVES2/LATERAL ORGAN BOUNDARIES (AS2/LOB) family in Arabidopsis thaliana, and functional and molecular comparisons between AS2 and other family members.</title>
        <authorList>
            <person name="Matsumura Y."/>
            <person name="Iwakawa H."/>
            <person name="Machida Y."/>
            <person name="Machida C."/>
        </authorList>
    </citation>
    <scope>NUCLEOTIDE SEQUENCE [MRNA]</scope>
    <source>
        <strain>cv. Columbia</strain>
    </source>
</reference>
<reference key="2">
    <citation type="journal article" date="1999" name="Nature">
        <title>Sequence and analysis of chromosome 2 of the plant Arabidopsis thaliana.</title>
        <authorList>
            <person name="Lin X."/>
            <person name="Kaul S."/>
            <person name="Rounsley S.D."/>
            <person name="Shea T.P."/>
            <person name="Benito M.-I."/>
            <person name="Town C.D."/>
            <person name="Fujii C.Y."/>
            <person name="Mason T.M."/>
            <person name="Bowman C.L."/>
            <person name="Barnstead M.E."/>
            <person name="Feldblyum T.V."/>
            <person name="Buell C.R."/>
            <person name="Ketchum K.A."/>
            <person name="Lee J.J."/>
            <person name="Ronning C.M."/>
            <person name="Koo H.L."/>
            <person name="Moffat K.S."/>
            <person name="Cronin L.A."/>
            <person name="Shen M."/>
            <person name="Pai G."/>
            <person name="Van Aken S."/>
            <person name="Umayam L."/>
            <person name="Tallon L.J."/>
            <person name="Gill J.E."/>
            <person name="Adams M.D."/>
            <person name="Carrera A.J."/>
            <person name="Creasy T.H."/>
            <person name="Goodman H.M."/>
            <person name="Somerville C.R."/>
            <person name="Copenhaver G.P."/>
            <person name="Preuss D."/>
            <person name="Nierman W.C."/>
            <person name="White O."/>
            <person name="Eisen J.A."/>
            <person name="Salzberg S.L."/>
            <person name="Fraser C.M."/>
            <person name="Venter J.C."/>
        </authorList>
    </citation>
    <scope>NUCLEOTIDE SEQUENCE [LARGE SCALE GENOMIC DNA]</scope>
    <source>
        <strain>cv. Columbia</strain>
    </source>
</reference>
<reference key="3">
    <citation type="journal article" date="2017" name="Plant J.">
        <title>Araport11: a complete reannotation of the Arabidopsis thaliana reference genome.</title>
        <authorList>
            <person name="Cheng C.Y."/>
            <person name="Krishnakumar V."/>
            <person name="Chan A.P."/>
            <person name="Thibaud-Nissen F."/>
            <person name="Schobel S."/>
            <person name="Town C.D."/>
        </authorList>
    </citation>
    <scope>GENOME REANNOTATION</scope>
    <source>
        <strain>cv. Columbia</strain>
    </source>
</reference>
<reference key="4">
    <citation type="journal article" date="2002" name="Plant Physiol.">
        <title>The LATERAL ORGAN BOUNDARIES gene defines a novel, plant-specific gene family.</title>
        <authorList>
            <person name="Shuai B."/>
            <person name="Reynaga-Pena C.G."/>
            <person name="Springer P.S."/>
        </authorList>
    </citation>
    <scope>TISSUE SPECIFICITY</scope>
    <scope>GENE FAMILY</scope>
    <scope>NOMENCLATURE</scope>
</reference>
<reference key="5">
    <citation type="journal article" date="2002" name="Plant Cell Physiol.">
        <title>The ASYMMETRIC LEAVES2 gene of Arabidopsis thaliana, required for formation of a symmetric flat leaf lamina, encodes a member of a novel family of proteins characterized by cysteine repeats and a leucine zipper.</title>
        <authorList>
            <person name="Iwakawa H."/>
            <person name="Ueno Y."/>
            <person name="Semiarti E."/>
            <person name="Onouchi H."/>
            <person name="Kojima S."/>
            <person name="Tsukaya H."/>
            <person name="Hasebe M."/>
            <person name="Soma T."/>
            <person name="Ikezaki M."/>
            <person name="Machida C."/>
            <person name="Machida Y."/>
        </authorList>
    </citation>
    <scope>GENE FAMILY</scope>
    <scope>NOMENCLATURE</scope>
</reference>
<sequence>MMTGNLNGGGRGGEGPCGACKFLRRKCVKGCVFAPYFDAEQGTARFAAVHKVFGASNASKMLLRLPLHKRLDAVVTLCYEAMARIRDPVYGSVGHLFSLQHQVMNLQAELAHVQARLSTIQRFPLQSPQQMQPPSFDPAHNNEYAMEPSNLDSVWGEEHLLQDGTGDGDFQELASQFVSRYLPAVKLPACT</sequence>
<accession>O22132</accession>
<accession>B7XG77</accession>